<reference key="1">
    <citation type="journal article" date="1989" name="Proc. Natl. Acad. Sci. U.S.A.">
        <title>Comparison of homeobox-containing genes of the honeybee and Drosophila.</title>
        <authorList>
            <person name="Walldorf U."/>
            <person name="Fleig R."/>
            <person name="Gehring W.J."/>
        </authorList>
    </citation>
    <scope>NUCLEOTIDE SEQUENCE [GENOMIC DNA]</scope>
</reference>
<sequence>TVNANGEVKRQRTSYTRYQTLELEKEFHFNRYLTRRRRIEIAHALCLTERQIKIWFQNRRMKWKKEHKMASMNIVPYHMSPYGHPY</sequence>
<feature type="chain" id="PRO_0000200265" description="Homeobox protein H55">
    <location>
        <begin position="1" status="less than"/>
        <end position="86" status="greater than"/>
    </location>
</feature>
<feature type="DNA-binding region" description="Homeobox" evidence="1">
    <location>
        <begin position="8"/>
        <end position="67"/>
    </location>
</feature>
<feature type="non-terminal residue">
    <location>
        <position position="1"/>
    </location>
</feature>
<feature type="non-terminal residue">
    <location>
        <position position="86"/>
    </location>
</feature>
<accession>P15859</accession>
<protein>
    <recommendedName>
        <fullName>Homeobox protein H55</fullName>
    </recommendedName>
</protein>
<keyword id="KW-0217">Developmental protein</keyword>
<keyword id="KW-0238">DNA-binding</keyword>
<keyword id="KW-0371">Homeobox</keyword>
<keyword id="KW-0539">Nucleus</keyword>
<keyword id="KW-1185">Reference proteome</keyword>
<organism>
    <name type="scientific">Apis mellifera</name>
    <name type="common">Honeybee</name>
    <dbReference type="NCBI Taxonomy" id="7460"/>
    <lineage>
        <taxon>Eukaryota</taxon>
        <taxon>Metazoa</taxon>
        <taxon>Ecdysozoa</taxon>
        <taxon>Arthropoda</taxon>
        <taxon>Hexapoda</taxon>
        <taxon>Insecta</taxon>
        <taxon>Pterygota</taxon>
        <taxon>Neoptera</taxon>
        <taxon>Endopterygota</taxon>
        <taxon>Hymenoptera</taxon>
        <taxon>Apocrita</taxon>
        <taxon>Aculeata</taxon>
        <taxon>Apoidea</taxon>
        <taxon>Anthophila</taxon>
        <taxon>Apidae</taxon>
        <taxon>Apis</taxon>
    </lineage>
</organism>
<name>SCR_APIME</name>
<proteinExistence type="inferred from homology"/>
<evidence type="ECO:0000255" key="1">
    <source>
        <dbReference type="PROSITE-ProRule" id="PRU00108"/>
    </source>
</evidence>
<evidence type="ECO:0000305" key="2"/>
<comment type="function">
    <text>Sequence-specific transcription factor which is part of a developmental regulatory system that provides cells with specific positional identities on the anterior-posterior axis.</text>
</comment>
<comment type="subcellular location">
    <subcellularLocation>
        <location>Nucleus</location>
    </subcellularLocation>
</comment>
<comment type="similarity">
    <text evidence="2">Belongs to the Antp homeobox family. Deformed subfamily.</text>
</comment>
<dbReference type="EMBL" id="M29488">
    <property type="protein sequence ID" value="AAA27723.1"/>
    <property type="molecule type" value="Genomic_DNA"/>
</dbReference>
<dbReference type="PIR" id="A34510">
    <property type="entry name" value="A34510"/>
</dbReference>
<dbReference type="SMR" id="P15859"/>
<dbReference type="STRING" id="7460.P15859"/>
<dbReference type="PaxDb" id="7460-GB51295-PA"/>
<dbReference type="EnsemblMetazoa" id="XM_623900">
    <property type="protein sequence ID" value="XP_623903"/>
    <property type="gene ID" value="LOC551506"/>
</dbReference>
<dbReference type="eggNOG" id="KOG0489">
    <property type="taxonomic scope" value="Eukaryota"/>
</dbReference>
<dbReference type="InParanoid" id="P15859"/>
<dbReference type="Proteomes" id="UP000005203">
    <property type="component" value="Unplaced"/>
</dbReference>
<dbReference type="GO" id="GO:0005654">
    <property type="term" value="C:nucleoplasm"/>
    <property type="evidence" value="ECO:0007669"/>
    <property type="project" value="TreeGrafter"/>
</dbReference>
<dbReference type="GO" id="GO:0000981">
    <property type="term" value="F:DNA-binding transcription factor activity, RNA polymerase II-specific"/>
    <property type="evidence" value="ECO:0007669"/>
    <property type="project" value="InterPro"/>
</dbReference>
<dbReference type="GO" id="GO:0000978">
    <property type="term" value="F:RNA polymerase II cis-regulatory region sequence-specific DNA binding"/>
    <property type="evidence" value="ECO:0007669"/>
    <property type="project" value="TreeGrafter"/>
</dbReference>
<dbReference type="GO" id="GO:0009952">
    <property type="term" value="P:anterior/posterior pattern specification"/>
    <property type="evidence" value="ECO:0007669"/>
    <property type="project" value="TreeGrafter"/>
</dbReference>
<dbReference type="GO" id="GO:0045944">
    <property type="term" value="P:positive regulation of transcription by RNA polymerase II"/>
    <property type="evidence" value="ECO:0007669"/>
    <property type="project" value="TreeGrafter"/>
</dbReference>
<dbReference type="CDD" id="cd00086">
    <property type="entry name" value="homeodomain"/>
    <property type="match status" value="1"/>
</dbReference>
<dbReference type="FunFam" id="1.10.10.60:FF:000055">
    <property type="entry name" value="Homeobox protein Hox-A5"/>
    <property type="match status" value="1"/>
</dbReference>
<dbReference type="Gene3D" id="1.10.10.60">
    <property type="entry name" value="Homeodomain-like"/>
    <property type="match status" value="1"/>
</dbReference>
<dbReference type="InterPro" id="IPR050609">
    <property type="entry name" value="Antp_homeobox_Deformed_sf"/>
</dbReference>
<dbReference type="InterPro" id="IPR001356">
    <property type="entry name" value="HD"/>
</dbReference>
<dbReference type="InterPro" id="IPR020479">
    <property type="entry name" value="HD_metazoa"/>
</dbReference>
<dbReference type="InterPro" id="IPR017970">
    <property type="entry name" value="Homeobox_CS"/>
</dbReference>
<dbReference type="InterPro" id="IPR009057">
    <property type="entry name" value="Homeodomain-like_sf"/>
</dbReference>
<dbReference type="PANTHER" id="PTHR45771">
    <property type="entry name" value="HOMEOTIC PROTEIN DEFORMED"/>
    <property type="match status" value="1"/>
</dbReference>
<dbReference type="PANTHER" id="PTHR45771:SF6">
    <property type="entry name" value="HOMEOTIC PROTEIN SEX COMBS REDUCED"/>
    <property type="match status" value="1"/>
</dbReference>
<dbReference type="Pfam" id="PF00046">
    <property type="entry name" value="Homeodomain"/>
    <property type="match status" value="1"/>
</dbReference>
<dbReference type="PRINTS" id="PR00024">
    <property type="entry name" value="HOMEOBOX"/>
</dbReference>
<dbReference type="SMART" id="SM00389">
    <property type="entry name" value="HOX"/>
    <property type="match status" value="1"/>
</dbReference>
<dbReference type="SUPFAM" id="SSF46689">
    <property type="entry name" value="Homeodomain-like"/>
    <property type="match status" value="1"/>
</dbReference>
<dbReference type="PROSITE" id="PS00027">
    <property type="entry name" value="HOMEOBOX_1"/>
    <property type="match status" value="1"/>
</dbReference>
<dbReference type="PROSITE" id="PS50071">
    <property type="entry name" value="HOMEOBOX_2"/>
    <property type="match status" value="1"/>
</dbReference>